<accession>A9N238</accession>
<gene>
    <name evidence="1" type="primary">pheS</name>
    <name type="ordered locus">SPAB_02000</name>
</gene>
<feature type="chain" id="PRO_1000078849" description="Phenylalanine--tRNA ligase alpha subunit">
    <location>
        <begin position="1"/>
        <end position="327"/>
    </location>
</feature>
<feature type="binding site" evidence="1">
    <location>
        <position position="252"/>
    </location>
    <ligand>
        <name>Mg(2+)</name>
        <dbReference type="ChEBI" id="CHEBI:18420"/>
        <note>shared with beta subunit</note>
    </ligand>
</feature>
<sequence>MSHLAELVANAAAAINQASDVAALDNVRVEYLGKKGHLTLQMTTLRDLPPEERPAAGAVINAAKEQVQQALNARKAELESAALNARLAAETIDISLPGRRIENGGLHPVTRTIDRIESFFGELGFTVATGPEIEDDYHNFDALNIPGHHPARADHDTFWFDATRLLRTQTSGVQIRTMKAQQPPIRIIAPGRVYRNDYDQTHTPMFHQMEGLIVDTNISFTNLKGTLHDFLRNFFEEDLQIRFRPSYFPFTEPSAEVDVMGKNGKWLEVLGCGMVHPNVLRNVGIDPEIYSGFAFGMGMERLTMLRYGVTDLRSFFENDLRFLKQFK</sequence>
<evidence type="ECO:0000255" key="1">
    <source>
        <dbReference type="HAMAP-Rule" id="MF_00281"/>
    </source>
</evidence>
<organism>
    <name type="scientific">Salmonella paratyphi B (strain ATCC BAA-1250 / SPB7)</name>
    <dbReference type="NCBI Taxonomy" id="1016998"/>
    <lineage>
        <taxon>Bacteria</taxon>
        <taxon>Pseudomonadati</taxon>
        <taxon>Pseudomonadota</taxon>
        <taxon>Gammaproteobacteria</taxon>
        <taxon>Enterobacterales</taxon>
        <taxon>Enterobacteriaceae</taxon>
        <taxon>Salmonella</taxon>
    </lineage>
</organism>
<keyword id="KW-0030">Aminoacyl-tRNA synthetase</keyword>
<keyword id="KW-0067">ATP-binding</keyword>
<keyword id="KW-0963">Cytoplasm</keyword>
<keyword id="KW-0436">Ligase</keyword>
<keyword id="KW-0460">Magnesium</keyword>
<keyword id="KW-0479">Metal-binding</keyword>
<keyword id="KW-0547">Nucleotide-binding</keyword>
<keyword id="KW-0648">Protein biosynthesis</keyword>
<proteinExistence type="inferred from homology"/>
<reference key="1">
    <citation type="submission" date="2007-11" db="EMBL/GenBank/DDBJ databases">
        <authorList>
            <consortium name="The Salmonella enterica serovar Paratyphi B Genome Sequencing Project"/>
            <person name="McClelland M."/>
            <person name="Sanderson E.K."/>
            <person name="Porwollik S."/>
            <person name="Spieth J."/>
            <person name="Clifton W.S."/>
            <person name="Fulton R."/>
            <person name="Cordes M."/>
            <person name="Wollam A."/>
            <person name="Shah N."/>
            <person name="Pepin K."/>
            <person name="Bhonagiri V."/>
            <person name="Nash W."/>
            <person name="Johnson M."/>
            <person name="Thiruvilangam P."/>
            <person name="Wilson R."/>
        </authorList>
    </citation>
    <scope>NUCLEOTIDE SEQUENCE [LARGE SCALE GENOMIC DNA]</scope>
    <source>
        <strain>ATCC BAA-1250 / SPB7</strain>
    </source>
</reference>
<comment type="catalytic activity">
    <reaction evidence="1">
        <text>tRNA(Phe) + L-phenylalanine + ATP = L-phenylalanyl-tRNA(Phe) + AMP + diphosphate + H(+)</text>
        <dbReference type="Rhea" id="RHEA:19413"/>
        <dbReference type="Rhea" id="RHEA-COMP:9668"/>
        <dbReference type="Rhea" id="RHEA-COMP:9699"/>
        <dbReference type="ChEBI" id="CHEBI:15378"/>
        <dbReference type="ChEBI" id="CHEBI:30616"/>
        <dbReference type="ChEBI" id="CHEBI:33019"/>
        <dbReference type="ChEBI" id="CHEBI:58095"/>
        <dbReference type="ChEBI" id="CHEBI:78442"/>
        <dbReference type="ChEBI" id="CHEBI:78531"/>
        <dbReference type="ChEBI" id="CHEBI:456215"/>
        <dbReference type="EC" id="6.1.1.20"/>
    </reaction>
</comment>
<comment type="cofactor">
    <cofactor evidence="1">
        <name>Mg(2+)</name>
        <dbReference type="ChEBI" id="CHEBI:18420"/>
    </cofactor>
    <text evidence="1">Binds 2 magnesium ions per tetramer.</text>
</comment>
<comment type="subunit">
    <text evidence="1">Tetramer of two alpha and two beta subunits.</text>
</comment>
<comment type="subcellular location">
    <subcellularLocation>
        <location evidence="1">Cytoplasm</location>
    </subcellularLocation>
</comment>
<comment type="similarity">
    <text evidence="1">Belongs to the class-II aminoacyl-tRNA synthetase family. Phe-tRNA synthetase alpha subunit type 1 subfamily.</text>
</comment>
<dbReference type="EC" id="6.1.1.20" evidence="1"/>
<dbReference type="EMBL" id="CP000886">
    <property type="protein sequence ID" value="ABX67387.1"/>
    <property type="molecule type" value="Genomic_DNA"/>
</dbReference>
<dbReference type="RefSeq" id="WP_000018570.1">
    <property type="nucleotide sequence ID" value="NC_010102.1"/>
</dbReference>
<dbReference type="SMR" id="A9N238"/>
<dbReference type="KEGG" id="spq:SPAB_02000"/>
<dbReference type="PATRIC" id="fig|1016998.12.peg.1888"/>
<dbReference type="HOGENOM" id="CLU_025086_0_1_6"/>
<dbReference type="BioCyc" id="SENT1016998:SPAB_RS08160-MONOMER"/>
<dbReference type="Proteomes" id="UP000008556">
    <property type="component" value="Chromosome"/>
</dbReference>
<dbReference type="GO" id="GO:0005737">
    <property type="term" value="C:cytoplasm"/>
    <property type="evidence" value="ECO:0007669"/>
    <property type="project" value="UniProtKB-SubCell"/>
</dbReference>
<dbReference type="GO" id="GO:0005524">
    <property type="term" value="F:ATP binding"/>
    <property type="evidence" value="ECO:0007669"/>
    <property type="project" value="UniProtKB-UniRule"/>
</dbReference>
<dbReference type="GO" id="GO:0000287">
    <property type="term" value="F:magnesium ion binding"/>
    <property type="evidence" value="ECO:0007669"/>
    <property type="project" value="UniProtKB-UniRule"/>
</dbReference>
<dbReference type="GO" id="GO:0004826">
    <property type="term" value="F:phenylalanine-tRNA ligase activity"/>
    <property type="evidence" value="ECO:0007669"/>
    <property type="project" value="UniProtKB-UniRule"/>
</dbReference>
<dbReference type="GO" id="GO:0000049">
    <property type="term" value="F:tRNA binding"/>
    <property type="evidence" value="ECO:0007669"/>
    <property type="project" value="InterPro"/>
</dbReference>
<dbReference type="GO" id="GO:0006432">
    <property type="term" value="P:phenylalanyl-tRNA aminoacylation"/>
    <property type="evidence" value="ECO:0007669"/>
    <property type="project" value="UniProtKB-UniRule"/>
</dbReference>
<dbReference type="CDD" id="cd00496">
    <property type="entry name" value="PheRS_alpha_core"/>
    <property type="match status" value="1"/>
</dbReference>
<dbReference type="FunFam" id="3.30.930.10:FF:000003">
    <property type="entry name" value="Phenylalanine--tRNA ligase alpha subunit"/>
    <property type="match status" value="1"/>
</dbReference>
<dbReference type="Gene3D" id="3.30.930.10">
    <property type="entry name" value="Bira Bifunctional Protein, Domain 2"/>
    <property type="match status" value="1"/>
</dbReference>
<dbReference type="HAMAP" id="MF_00281">
    <property type="entry name" value="Phe_tRNA_synth_alpha1"/>
    <property type="match status" value="1"/>
</dbReference>
<dbReference type="InterPro" id="IPR006195">
    <property type="entry name" value="aa-tRNA-synth_II"/>
</dbReference>
<dbReference type="InterPro" id="IPR045864">
    <property type="entry name" value="aa-tRNA-synth_II/BPL/LPL"/>
</dbReference>
<dbReference type="InterPro" id="IPR004529">
    <property type="entry name" value="Phe-tRNA-synth_IIc_asu"/>
</dbReference>
<dbReference type="InterPro" id="IPR004188">
    <property type="entry name" value="Phe-tRNA_ligase_II_N"/>
</dbReference>
<dbReference type="InterPro" id="IPR022911">
    <property type="entry name" value="Phe_tRNA_ligase_alpha1_bac"/>
</dbReference>
<dbReference type="InterPro" id="IPR002319">
    <property type="entry name" value="Phenylalanyl-tRNA_Synthase"/>
</dbReference>
<dbReference type="InterPro" id="IPR010978">
    <property type="entry name" value="tRNA-bd_arm"/>
</dbReference>
<dbReference type="NCBIfam" id="TIGR00468">
    <property type="entry name" value="pheS"/>
    <property type="match status" value="1"/>
</dbReference>
<dbReference type="PANTHER" id="PTHR11538:SF41">
    <property type="entry name" value="PHENYLALANINE--TRNA LIGASE, MITOCHONDRIAL"/>
    <property type="match status" value="1"/>
</dbReference>
<dbReference type="PANTHER" id="PTHR11538">
    <property type="entry name" value="PHENYLALANYL-TRNA SYNTHETASE"/>
    <property type="match status" value="1"/>
</dbReference>
<dbReference type="Pfam" id="PF02912">
    <property type="entry name" value="Phe_tRNA-synt_N"/>
    <property type="match status" value="1"/>
</dbReference>
<dbReference type="Pfam" id="PF01409">
    <property type="entry name" value="tRNA-synt_2d"/>
    <property type="match status" value="1"/>
</dbReference>
<dbReference type="SUPFAM" id="SSF55681">
    <property type="entry name" value="Class II aaRS and biotin synthetases"/>
    <property type="match status" value="1"/>
</dbReference>
<dbReference type="SUPFAM" id="SSF46589">
    <property type="entry name" value="tRNA-binding arm"/>
    <property type="match status" value="1"/>
</dbReference>
<dbReference type="PROSITE" id="PS50862">
    <property type="entry name" value="AA_TRNA_LIGASE_II"/>
    <property type="match status" value="1"/>
</dbReference>
<name>SYFA_SALPB</name>
<protein>
    <recommendedName>
        <fullName evidence="1">Phenylalanine--tRNA ligase alpha subunit</fullName>
        <ecNumber evidence="1">6.1.1.20</ecNumber>
    </recommendedName>
    <alternativeName>
        <fullName evidence="1">Phenylalanyl-tRNA synthetase alpha subunit</fullName>
        <shortName evidence="1">PheRS</shortName>
    </alternativeName>
</protein>